<comment type="function">
    <text evidence="1">Involved in base excision repair of DNA damaged by oxidation or by mutagenic agents. Acts as a DNA glycosylase that recognizes and removes damaged bases. Has a preference for oxidized pyrimidines, such as thymine glycol, 5,6-dihydrouracil and 5,6-dihydrothymine. Has AP (apurinic/apyrimidinic) lyase activity and introduces nicks in the DNA strand. Cleaves the DNA backbone by beta-delta elimination to generate a single-strand break at the site of the removed base with both 3'- and 5'-phosphates.</text>
</comment>
<comment type="catalytic activity">
    <reaction evidence="1">
        <text>2'-deoxyribonucleotide-(2'-deoxyribose 5'-phosphate)-2'-deoxyribonucleotide-DNA = a 3'-end 2'-deoxyribonucleotide-(2,3-dehydro-2,3-deoxyribose 5'-phosphate)-DNA + a 5'-end 5'-phospho-2'-deoxyribonucleoside-DNA + H(+)</text>
        <dbReference type="Rhea" id="RHEA:66592"/>
        <dbReference type="Rhea" id="RHEA-COMP:13180"/>
        <dbReference type="Rhea" id="RHEA-COMP:16897"/>
        <dbReference type="Rhea" id="RHEA-COMP:17067"/>
        <dbReference type="ChEBI" id="CHEBI:15378"/>
        <dbReference type="ChEBI" id="CHEBI:136412"/>
        <dbReference type="ChEBI" id="CHEBI:157695"/>
        <dbReference type="ChEBI" id="CHEBI:167181"/>
        <dbReference type="EC" id="4.2.99.18"/>
    </reaction>
</comment>
<comment type="cofactor">
    <cofactor evidence="1">
        <name>Zn(2+)</name>
        <dbReference type="ChEBI" id="CHEBI:29105"/>
    </cofactor>
    <text evidence="1">Binds 1 zinc ion per subunit.</text>
</comment>
<comment type="similarity">
    <text evidence="1">Belongs to the FPG family.</text>
</comment>
<feature type="initiator methionine" description="Removed" evidence="1">
    <location>
        <position position="1"/>
    </location>
</feature>
<feature type="chain" id="PRO_1000139934" description="Endonuclease 8">
    <location>
        <begin position="2"/>
        <end position="263"/>
    </location>
</feature>
<feature type="zinc finger region" description="FPG-type" evidence="1">
    <location>
        <begin position="229"/>
        <end position="263"/>
    </location>
</feature>
<feature type="active site" description="Schiff-base intermediate with DNA" evidence="1">
    <location>
        <position position="2"/>
    </location>
</feature>
<feature type="active site" description="Proton donor" evidence="1">
    <location>
        <position position="3"/>
    </location>
</feature>
<feature type="active site" description="Proton donor; for beta-elimination activity" evidence="1">
    <location>
        <position position="53"/>
    </location>
</feature>
<feature type="active site" description="Proton donor; for delta-elimination activity" evidence="1">
    <location>
        <position position="253"/>
    </location>
</feature>
<feature type="binding site" evidence="1">
    <location>
        <position position="70"/>
    </location>
    <ligand>
        <name>DNA</name>
        <dbReference type="ChEBI" id="CHEBI:16991"/>
    </ligand>
</feature>
<feature type="binding site" evidence="1">
    <location>
        <position position="125"/>
    </location>
    <ligand>
        <name>DNA</name>
        <dbReference type="ChEBI" id="CHEBI:16991"/>
    </ligand>
</feature>
<feature type="binding site" evidence="1">
    <location>
        <position position="169"/>
    </location>
    <ligand>
        <name>DNA</name>
        <dbReference type="ChEBI" id="CHEBI:16991"/>
    </ligand>
</feature>
<gene>
    <name evidence="1" type="primary">nei</name>
    <name type="ordered locus">ECDH10B_0781</name>
</gene>
<dbReference type="EC" id="3.2.2.-" evidence="1"/>
<dbReference type="EC" id="4.2.99.18" evidence="1"/>
<dbReference type="EMBL" id="CP000948">
    <property type="protein sequence ID" value="ACB01923.1"/>
    <property type="molecule type" value="Genomic_DNA"/>
</dbReference>
<dbReference type="RefSeq" id="WP_001113989.1">
    <property type="nucleotide sequence ID" value="NC_010473.1"/>
</dbReference>
<dbReference type="SMR" id="B1X6P5"/>
<dbReference type="KEGG" id="ecd:ECDH10B_0781"/>
<dbReference type="HOGENOM" id="CLU_038423_2_2_6"/>
<dbReference type="GO" id="GO:0140078">
    <property type="term" value="F:class I DNA-(apurinic or apyrimidinic site) endonuclease activity"/>
    <property type="evidence" value="ECO:0007669"/>
    <property type="project" value="UniProtKB-EC"/>
</dbReference>
<dbReference type="GO" id="GO:0003684">
    <property type="term" value="F:damaged DNA binding"/>
    <property type="evidence" value="ECO:0007669"/>
    <property type="project" value="InterPro"/>
</dbReference>
<dbReference type="GO" id="GO:0000703">
    <property type="term" value="F:oxidized pyrimidine nucleobase lesion DNA N-glycosylase activity"/>
    <property type="evidence" value="ECO:0007669"/>
    <property type="project" value="UniProtKB-UniRule"/>
</dbReference>
<dbReference type="GO" id="GO:0008270">
    <property type="term" value="F:zinc ion binding"/>
    <property type="evidence" value="ECO:0007669"/>
    <property type="project" value="UniProtKB-UniRule"/>
</dbReference>
<dbReference type="GO" id="GO:0006284">
    <property type="term" value="P:base-excision repair"/>
    <property type="evidence" value="ECO:0007669"/>
    <property type="project" value="InterPro"/>
</dbReference>
<dbReference type="CDD" id="cd08965">
    <property type="entry name" value="EcNei-like_N"/>
    <property type="match status" value="1"/>
</dbReference>
<dbReference type="FunFam" id="1.10.8.50:FF:000005">
    <property type="entry name" value="Endonuclease 8"/>
    <property type="match status" value="1"/>
</dbReference>
<dbReference type="FunFam" id="3.20.190.10:FF:000002">
    <property type="entry name" value="Endonuclease 8"/>
    <property type="match status" value="1"/>
</dbReference>
<dbReference type="Gene3D" id="1.10.8.50">
    <property type="match status" value="1"/>
</dbReference>
<dbReference type="Gene3D" id="3.20.190.10">
    <property type="entry name" value="MutM-like, N-terminal"/>
    <property type="match status" value="1"/>
</dbReference>
<dbReference type="HAMAP" id="MF_01253">
    <property type="entry name" value="Endonuclease_8"/>
    <property type="match status" value="1"/>
</dbReference>
<dbReference type="InterPro" id="IPR015886">
    <property type="entry name" value="DNA_glyclase/AP_lyase_DNA-bd"/>
</dbReference>
<dbReference type="InterPro" id="IPR015887">
    <property type="entry name" value="DNA_glyclase_Znf_dom_DNA_BS"/>
</dbReference>
<dbReference type="InterPro" id="IPR044091">
    <property type="entry name" value="EcNei-like_N"/>
</dbReference>
<dbReference type="InterPro" id="IPR023713">
    <property type="entry name" value="Endonuclease-VIII"/>
</dbReference>
<dbReference type="InterPro" id="IPR012319">
    <property type="entry name" value="FPG_cat"/>
</dbReference>
<dbReference type="InterPro" id="IPR035937">
    <property type="entry name" value="MutM-like_N-ter"/>
</dbReference>
<dbReference type="InterPro" id="IPR010979">
    <property type="entry name" value="Ribosomal_uS13-like_H2TH"/>
</dbReference>
<dbReference type="InterPro" id="IPR000214">
    <property type="entry name" value="Znf_DNA_glyclase/AP_lyase"/>
</dbReference>
<dbReference type="InterPro" id="IPR010663">
    <property type="entry name" value="Znf_FPG/IleRS"/>
</dbReference>
<dbReference type="NCBIfam" id="NF007763">
    <property type="entry name" value="PRK10445.1"/>
    <property type="match status" value="1"/>
</dbReference>
<dbReference type="PANTHER" id="PTHR42697">
    <property type="entry name" value="ENDONUCLEASE 8"/>
    <property type="match status" value="1"/>
</dbReference>
<dbReference type="PANTHER" id="PTHR42697:SF1">
    <property type="entry name" value="ENDONUCLEASE 8"/>
    <property type="match status" value="1"/>
</dbReference>
<dbReference type="Pfam" id="PF01149">
    <property type="entry name" value="Fapy_DNA_glyco"/>
    <property type="match status" value="1"/>
</dbReference>
<dbReference type="Pfam" id="PF06831">
    <property type="entry name" value="H2TH"/>
    <property type="match status" value="1"/>
</dbReference>
<dbReference type="Pfam" id="PF06827">
    <property type="entry name" value="zf-FPG_IleRS"/>
    <property type="match status" value="1"/>
</dbReference>
<dbReference type="SMART" id="SM00898">
    <property type="entry name" value="Fapy_DNA_glyco"/>
    <property type="match status" value="1"/>
</dbReference>
<dbReference type="SMART" id="SM01232">
    <property type="entry name" value="H2TH"/>
    <property type="match status" value="1"/>
</dbReference>
<dbReference type="SUPFAM" id="SSF57716">
    <property type="entry name" value="Glucocorticoid receptor-like (DNA-binding domain)"/>
    <property type="match status" value="1"/>
</dbReference>
<dbReference type="SUPFAM" id="SSF81624">
    <property type="entry name" value="N-terminal domain of MutM-like DNA repair proteins"/>
    <property type="match status" value="1"/>
</dbReference>
<dbReference type="SUPFAM" id="SSF46946">
    <property type="entry name" value="S13-like H2TH domain"/>
    <property type="match status" value="1"/>
</dbReference>
<dbReference type="PROSITE" id="PS51068">
    <property type="entry name" value="FPG_CAT"/>
    <property type="match status" value="1"/>
</dbReference>
<dbReference type="PROSITE" id="PS01242">
    <property type="entry name" value="ZF_FPG_1"/>
    <property type="match status" value="1"/>
</dbReference>
<dbReference type="PROSITE" id="PS51066">
    <property type="entry name" value="ZF_FPG_2"/>
    <property type="match status" value="1"/>
</dbReference>
<reference key="1">
    <citation type="journal article" date="2008" name="J. Bacteriol.">
        <title>The complete genome sequence of Escherichia coli DH10B: insights into the biology of a laboratory workhorse.</title>
        <authorList>
            <person name="Durfee T."/>
            <person name="Nelson R."/>
            <person name="Baldwin S."/>
            <person name="Plunkett G. III"/>
            <person name="Burland V."/>
            <person name="Mau B."/>
            <person name="Petrosino J.F."/>
            <person name="Qin X."/>
            <person name="Muzny D.M."/>
            <person name="Ayele M."/>
            <person name="Gibbs R.A."/>
            <person name="Csorgo B."/>
            <person name="Posfai G."/>
            <person name="Weinstock G.M."/>
            <person name="Blattner F.R."/>
        </authorList>
    </citation>
    <scope>NUCLEOTIDE SEQUENCE [LARGE SCALE GENOMIC DNA]</scope>
    <source>
        <strain>K12 / DH10B</strain>
    </source>
</reference>
<protein>
    <recommendedName>
        <fullName evidence="1">Endonuclease 8</fullName>
    </recommendedName>
    <alternativeName>
        <fullName evidence="1">DNA glycosylase/AP lyase Nei</fullName>
        <ecNumber evidence="1">3.2.2.-</ecNumber>
        <ecNumber evidence="1">4.2.99.18</ecNumber>
    </alternativeName>
    <alternativeName>
        <fullName evidence="1">DNA-(apurinic or apyrimidinic site) lyase Nei</fullName>
    </alternativeName>
    <alternativeName>
        <fullName evidence="1">Endonuclease VIII</fullName>
    </alternativeName>
</protein>
<sequence length="263" mass="29845">MPEGPEIRRAADNLEAAIKGKPLTDVWFAFPQLKPYQSQLIGQHVTHVETRGKALLTHFSNDLTLYSHNQLYGVWRVVDTGEEPQTTRVLRVKLQTADKTILLYSASDIEMLTPEQLTTHPFLQRVGPDVLDPNLTPEVVKERLLSPRFRNRQFAGLLLDQAFLAGLGNYLRVEILWQVGLTGNHKAKDLNAAQLDALAHALLEIPRFSYATRGQVDENKHHGALFRFKVFHRDGEPCERCGSIIEKTTLSSRPFYWCPGCQH</sequence>
<name>END8_ECODH</name>
<accession>B1X6P5</accession>
<evidence type="ECO:0000255" key="1">
    <source>
        <dbReference type="HAMAP-Rule" id="MF_01253"/>
    </source>
</evidence>
<keyword id="KW-0227">DNA damage</keyword>
<keyword id="KW-0234">DNA repair</keyword>
<keyword id="KW-0238">DNA-binding</keyword>
<keyword id="KW-0326">Glycosidase</keyword>
<keyword id="KW-0378">Hydrolase</keyword>
<keyword id="KW-0456">Lyase</keyword>
<keyword id="KW-0479">Metal-binding</keyword>
<keyword id="KW-0511">Multifunctional enzyme</keyword>
<keyword id="KW-0862">Zinc</keyword>
<keyword id="KW-0863">Zinc-finger</keyword>
<proteinExistence type="inferred from homology"/>
<organism>
    <name type="scientific">Escherichia coli (strain K12 / DH10B)</name>
    <dbReference type="NCBI Taxonomy" id="316385"/>
    <lineage>
        <taxon>Bacteria</taxon>
        <taxon>Pseudomonadati</taxon>
        <taxon>Pseudomonadota</taxon>
        <taxon>Gammaproteobacteria</taxon>
        <taxon>Enterobacterales</taxon>
        <taxon>Enterobacteriaceae</taxon>
        <taxon>Escherichia</taxon>
    </lineage>
</organism>